<protein>
    <recommendedName>
        <fullName evidence="1">Probable phosphatase Shal_1519</fullName>
        <ecNumber evidence="1">3.1.3.-</ecNumber>
    </recommendedName>
</protein>
<sequence>MKYLVDTHTHTIASTHAYSTLQEYIAMAKHKGIKLFATTDHGPDMADAPHFWHFVNLRVLPRVVDGVGILRGIEANIKNVVGEIDFFGDYLQDLDIVLAGFHEPVFAPSNKETHTAAMINCINSGHVDIITHPGNPAYPIDIEAVAKAAAENNVALEINNSSFLVSRKGSEHNCLAIAKAVKEAGGLLVMGSDSHVAYSLGDFTLAEQIVEQADFPIERLLNRSPEALLAFLSARGHASLDEYSVLLES</sequence>
<proteinExistence type="inferred from homology"/>
<reference key="1">
    <citation type="submission" date="2008-01" db="EMBL/GenBank/DDBJ databases">
        <title>Complete sequence of Shewanella halifaxensis HAW-EB4.</title>
        <authorList>
            <consortium name="US DOE Joint Genome Institute"/>
            <person name="Copeland A."/>
            <person name="Lucas S."/>
            <person name="Lapidus A."/>
            <person name="Glavina del Rio T."/>
            <person name="Dalin E."/>
            <person name="Tice H."/>
            <person name="Bruce D."/>
            <person name="Goodwin L."/>
            <person name="Pitluck S."/>
            <person name="Sims D."/>
            <person name="Brettin T."/>
            <person name="Detter J.C."/>
            <person name="Han C."/>
            <person name="Kuske C.R."/>
            <person name="Schmutz J."/>
            <person name="Larimer F."/>
            <person name="Land M."/>
            <person name="Hauser L."/>
            <person name="Kyrpides N."/>
            <person name="Kim E."/>
            <person name="Zhao J.-S."/>
            <person name="Richardson P."/>
        </authorList>
    </citation>
    <scope>NUCLEOTIDE SEQUENCE [LARGE SCALE GENOMIC DNA]</scope>
    <source>
        <strain>HAW-EB4</strain>
    </source>
</reference>
<accession>B0TN99</accession>
<gene>
    <name type="ordered locus">Shal_1519</name>
</gene>
<name>Y1519_SHEHH</name>
<organism>
    <name type="scientific">Shewanella halifaxensis (strain HAW-EB4)</name>
    <dbReference type="NCBI Taxonomy" id="458817"/>
    <lineage>
        <taxon>Bacteria</taxon>
        <taxon>Pseudomonadati</taxon>
        <taxon>Pseudomonadota</taxon>
        <taxon>Gammaproteobacteria</taxon>
        <taxon>Alteromonadales</taxon>
        <taxon>Shewanellaceae</taxon>
        <taxon>Shewanella</taxon>
    </lineage>
</organism>
<keyword id="KW-0378">Hydrolase</keyword>
<keyword id="KW-0479">Metal-binding</keyword>
<keyword id="KW-0862">Zinc</keyword>
<dbReference type="EC" id="3.1.3.-" evidence="1"/>
<dbReference type="EMBL" id="CP000931">
    <property type="protein sequence ID" value="ABZ76085.1"/>
    <property type="molecule type" value="Genomic_DNA"/>
</dbReference>
<dbReference type="RefSeq" id="WP_012276625.1">
    <property type="nucleotide sequence ID" value="NC_010334.1"/>
</dbReference>
<dbReference type="SMR" id="B0TN99"/>
<dbReference type="STRING" id="458817.Shal_1519"/>
<dbReference type="KEGG" id="shl:Shal_1519"/>
<dbReference type="eggNOG" id="COG1387">
    <property type="taxonomic scope" value="Bacteria"/>
</dbReference>
<dbReference type="HOGENOM" id="CLU_061999_0_1_6"/>
<dbReference type="OrthoDB" id="9808747at2"/>
<dbReference type="Proteomes" id="UP000001317">
    <property type="component" value="Chromosome"/>
</dbReference>
<dbReference type="GO" id="GO:0005829">
    <property type="term" value="C:cytosol"/>
    <property type="evidence" value="ECO:0007669"/>
    <property type="project" value="TreeGrafter"/>
</dbReference>
<dbReference type="GO" id="GO:0016791">
    <property type="term" value="F:phosphatase activity"/>
    <property type="evidence" value="ECO:0007669"/>
    <property type="project" value="UniProtKB-UniRule"/>
</dbReference>
<dbReference type="GO" id="GO:0008270">
    <property type="term" value="F:zinc ion binding"/>
    <property type="evidence" value="ECO:0007669"/>
    <property type="project" value="UniProtKB-UniRule"/>
</dbReference>
<dbReference type="GO" id="GO:0071978">
    <property type="term" value="P:bacterial-type flagellum-dependent swarming motility"/>
    <property type="evidence" value="ECO:0007669"/>
    <property type="project" value="TreeGrafter"/>
</dbReference>
<dbReference type="CDD" id="cd07437">
    <property type="entry name" value="PHP_HisPPase_Ycdx_like"/>
    <property type="match status" value="1"/>
</dbReference>
<dbReference type="FunFam" id="3.20.20.140:FF:000008">
    <property type="entry name" value="Probable phosphatase YcdX"/>
    <property type="match status" value="1"/>
</dbReference>
<dbReference type="Gene3D" id="3.20.20.140">
    <property type="entry name" value="Metal-dependent hydrolases"/>
    <property type="match status" value="1"/>
</dbReference>
<dbReference type="HAMAP" id="MF_01561">
    <property type="entry name" value="YcdX_phosphat"/>
    <property type="match status" value="1"/>
</dbReference>
<dbReference type="InterPro" id="IPR023710">
    <property type="entry name" value="Phosphatase_YcdX_put"/>
</dbReference>
<dbReference type="InterPro" id="IPR004013">
    <property type="entry name" value="PHP_dom"/>
</dbReference>
<dbReference type="InterPro" id="IPR050243">
    <property type="entry name" value="PHP_phosphatase"/>
</dbReference>
<dbReference type="InterPro" id="IPR003141">
    <property type="entry name" value="Pol/His_phosphatase_N"/>
</dbReference>
<dbReference type="InterPro" id="IPR016195">
    <property type="entry name" value="Pol/histidinol_Pase-like"/>
</dbReference>
<dbReference type="NCBIfam" id="NF006702">
    <property type="entry name" value="PRK09248.1"/>
    <property type="match status" value="1"/>
</dbReference>
<dbReference type="PANTHER" id="PTHR36928">
    <property type="entry name" value="PHOSPHATASE YCDX-RELATED"/>
    <property type="match status" value="1"/>
</dbReference>
<dbReference type="PANTHER" id="PTHR36928:SF1">
    <property type="entry name" value="PHOSPHATASE YCDX-RELATED"/>
    <property type="match status" value="1"/>
</dbReference>
<dbReference type="Pfam" id="PF02811">
    <property type="entry name" value="PHP"/>
    <property type="match status" value="1"/>
</dbReference>
<dbReference type="SMART" id="SM00481">
    <property type="entry name" value="POLIIIAc"/>
    <property type="match status" value="1"/>
</dbReference>
<dbReference type="SUPFAM" id="SSF89550">
    <property type="entry name" value="PHP domain-like"/>
    <property type="match status" value="1"/>
</dbReference>
<comment type="cofactor">
    <cofactor evidence="1">
        <name>Zn(2+)</name>
        <dbReference type="ChEBI" id="CHEBI:29105"/>
    </cofactor>
    <text evidence="1">Binds 3 Zn(2+) ions per subunit.</text>
</comment>
<comment type="similarity">
    <text evidence="1">Belongs to the PHP family.</text>
</comment>
<evidence type="ECO:0000255" key="1">
    <source>
        <dbReference type="HAMAP-Rule" id="MF_01561"/>
    </source>
</evidence>
<feature type="chain" id="PRO_1000087810" description="Probable phosphatase Shal_1519">
    <location>
        <begin position="1"/>
        <end position="249"/>
    </location>
</feature>
<feature type="binding site" evidence="1">
    <location>
        <position position="8"/>
    </location>
    <ligand>
        <name>Zn(2+)</name>
        <dbReference type="ChEBI" id="CHEBI:29105"/>
        <label>1</label>
    </ligand>
</feature>
<feature type="binding site" evidence="1">
    <location>
        <position position="10"/>
    </location>
    <ligand>
        <name>Zn(2+)</name>
        <dbReference type="ChEBI" id="CHEBI:29105"/>
        <label>1</label>
    </ligand>
</feature>
<feature type="binding site" evidence="1">
    <location>
        <position position="16"/>
    </location>
    <ligand>
        <name>Zn(2+)</name>
        <dbReference type="ChEBI" id="CHEBI:29105"/>
        <label>2</label>
    </ligand>
</feature>
<feature type="binding site" evidence="1">
    <location>
        <position position="41"/>
    </location>
    <ligand>
        <name>Zn(2+)</name>
        <dbReference type="ChEBI" id="CHEBI:29105"/>
        <label>2</label>
    </ligand>
</feature>
<feature type="binding site" evidence="1">
    <location>
        <position position="74"/>
    </location>
    <ligand>
        <name>Zn(2+)</name>
        <dbReference type="ChEBI" id="CHEBI:29105"/>
        <label>1</label>
    </ligand>
</feature>
<feature type="binding site" evidence="1">
    <location>
        <position position="74"/>
    </location>
    <ligand>
        <name>Zn(2+)</name>
        <dbReference type="ChEBI" id="CHEBI:29105"/>
        <label>3</label>
    </ligand>
</feature>
<feature type="binding site" evidence="1">
    <location>
        <position position="102"/>
    </location>
    <ligand>
        <name>Zn(2+)</name>
        <dbReference type="ChEBI" id="CHEBI:29105"/>
        <label>3</label>
    </ligand>
</feature>
<feature type="binding site" evidence="1">
    <location>
        <position position="132"/>
    </location>
    <ligand>
        <name>Zn(2+)</name>
        <dbReference type="ChEBI" id="CHEBI:29105"/>
        <label>3</label>
    </ligand>
</feature>
<feature type="binding site" evidence="1">
    <location>
        <position position="193"/>
    </location>
    <ligand>
        <name>Zn(2+)</name>
        <dbReference type="ChEBI" id="CHEBI:29105"/>
        <label>1</label>
    </ligand>
</feature>
<feature type="binding site" evidence="1">
    <location>
        <position position="195"/>
    </location>
    <ligand>
        <name>Zn(2+)</name>
        <dbReference type="ChEBI" id="CHEBI:29105"/>
        <label>2</label>
    </ligand>
</feature>